<accession>P40825</accession>
<accession>D6W330</accession>
<comment type="function">
    <text evidence="1 3">Catalyzes the attachment of alanine to tRNA(Ala) in a two-step reaction: alanine is first activated by ATP to form Ala-AMP and then transferred to the acceptor end of tRNA(Ala). Also edits incorrectly charged tRNA(Ala) via its editing domain.</text>
</comment>
<comment type="catalytic activity">
    <reaction evidence="1">
        <text>tRNA(Ala) + L-alanine + ATP = L-alanyl-tRNA(Ala) + AMP + diphosphate</text>
        <dbReference type="Rhea" id="RHEA:12540"/>
        <dbReference type="Rhea" id="RHEA-COMP:9657"/>
        <dbReference type="Rhea" id="RHEA-COMP:9923"/>
        <dbReference type="ChEBI" id="CHEBI:30616"/>
        <dbReference type="ChEBI" id="CHEBI:33019"/>
        <dbReference type="ChEBI" id="CHEBI:57972"/>
        <dbReference type="ChEBI" id="CHEBI:78442"/>
        <dbReference type="ChEBI" id="CHEBI:78497"/>
        <dbReference type="ChEBI" id="CHEBI:456215"/>
        <dbReference type="EC" id="6.1.1.7"/>
    </reaction>
</comment>
<comment type="cofactor">
    <cofactor evidence="1">
        <name>Zn(2+)</name>
        <dbReference type="ChEBI" id="CHEBI:29105"/>
    </cofactor>
    <text evidence="1">Binds 1 zinc ion per subunit.</text>
</comment>
<comment type="subunit">
    <text evidence="1">Monomer.</text>
</comment>
<comment type="subcellular location">
    <molecule>Isoform Cytoplasmic</molecule>
    <subcellularLocation>
        <location>Cytoplasm</location>
    </subcellularLocation>
</comment>
<comment type="subcellular location">
    <molecule>Isoform Mitochondrial</molecule>
    <subcellularLocation>
        <location>Mitochondrion</location>
    </subcellularLocation>
</comment>
<comment type="alternative products">
    <event type="alternative initiation"/>
    <isoform>
        <id>P40825-1</id>
        <name>Mitochondrial</name>
        <sequence type="displayed"/>
    </isoform>
    <isoform>
        <id>P40825-2</id>
        <name>Cytoplasmic</name>
        <sequence type="described" ref="VSP_040236"/>
    </isoform>
</comment>
<comment type="domain">
    <text evidence="1">Consists of three domains; the N-terminal catalytic domain, the editing domain and the C-terminal C-Ala domain. The editing domain removes incorrectly charged amino acids, while the C-Ala domain, along with tRNA(Ala), serves as a bridge to cooperatively bring together the editing and aminoacylation centers thus stimulating deacylation of misacylated tRNAs.</text>
</comment>
<comment type="miscellaneous">
    <text evidence="2">Present with 33800 molecules/cell in log phase SD medium.</text>
</comment>
<comment type="miscellaneous">
    <molecule>Isoform Mitochondrial</molecule>
    <text>Produced by alternative initiation at 2 upstream redundant non-AUG codons in-frame of the first AUG used for isoform Cytoplasmic.</text>
</comment>
<comment type="similarity">
    <text evidence="1">Belongs to the class-II aminoacyl-tRNA synthetase family.</text>
</comment>
<comment type="sequence caution" evidence="4">
    <conflict type="erroneous initiation">
        <sequence resource="EMBL-CDS" id="AAC49007"/>
    </conflict>
    <text>Truncated N-terminus.</text>
</comment>
<comment type="sequence caution" evidence="4">
    <conflict type="erroneous initiation">
        <sequence resource="EMBL-CDS" id="CAA89980"/>
    </conflict>
    <text>Truncated N-terminus.</text>
</comment>
<comment type="sequence caution" evidence="4">
    <conflict type="erroneous initiation">
        <sequence resource="EMBL-CDS" id="CAA99658"/>
    </conflict>
    <text>Truncated N-terminus.</text>
</comment>
<comment type="sequence caution" evidence="4">
    <conflict type="erroneous initiation">
        <sequence resource="EMBL-CDS" id="DAA11096"/>
    </conflict>
    <text>Truncated N-terminus.</text>
</comment>
<feature type="transit peptide" description="Mitochondrion">
    <location>
        <begin position="1"/>
        <end position="24"/>
    </location>
</feature>
<feature type="chain" id="PRO_0000075287" description="Alanine--tRNA ligase, mitochondrial">
    <location>
        <begin position="25"/>
        <end position="983"/>
    </location>
</feature>
<feature type="binding site" evidence="1">
    <location>
        <position position="625"/>
    </location>
    <ligand>
        <name>Zn(2+)</name>
        <dbReference type="ChEBI" id="CHEBI:29105"/>
    </ligand>
</feature>
<feature type="binding site" evidence="1">
    <location>
        <position position="629"/>
    </location>
    <ligand>
        <name>Zn(2+)</name>
        <dbReference type="ChEBI" id="CHEBI:29105"/>
    </ligand>
</feature>
<feature type="binding site" evidence="1">
    <location>
        <position position="744"/>
    </location>
    <ligand>
        <name>Zn(2+)</name>
        <dbReference type="ChEBI" id="CHEBI:29105"/>
    </ligand>
</feature>
<feature type="binding site" evidence="1">
    <location>
        <position position="748"/>
    </location>
    <ligand>
        <name>Zn(2+)</name>
        <dbReference type="ChEBI" id="CHEBI:29105"/>
    </ligand>
</feature>
<feature type="modified residue" description="Phosphoserine" evidence="5">
    <location>
        <position position="504"/>
    </location>
</feature>
<feature type="modified residue" description="Phosphoserine" evidence="6">
    <location>
        <position position="975"/>
    </location>
</feature>
<feature type="splice variant" id="VSP_040236" description="In isoform Cytoplasmic." evidence="4">
    <location>
        <begin position="1"/>
        <end position="25"/>
    </location>
</feature>
<feature type="sequence conflict" description="In Ref. 4; AAC49007." evidence="4" ref="4">
    <original>TTGL</original>
    <variation>NYRI</variation>
    <location>
        <begin position="4"/>
        <end position="7"/>
    </location>
</feature>
<feature type="sequence conflict" description="In Ref. 4; AAC49007." evidence="4" ref="4">
    <location>
        <position position="16"/>
    </location>
</feature>
<feature type="sequence conflict" description="In Ref. 4; AAC49007." evidence="4" ref="4">
    <original>R</original>
    <variation>S</variation>
    <location>
        <position position="161"/>
    </location>
</feature>
<feature type="sequence conflict" description="In Ref. 4; AAC49007." evidence="4" ref="4">
    <original>KDQ</original>
    <variation>RTK</variation>
    <location>
        <begin position="490"/>
        <end position="492"/>
    </location>
</feature>
<feature type="sequence conflict" description="In Ref. 4; AAC49007." evidence="4" ref="4">
    <original>FE</original>
    <variation>LQ</variation>
    <location>
        <begin position="865"/>
        <end position="866"/>
    </location>
</feature>
<sequence>MTSTTGLRNLTLSFKKQLTTSTRTIMTIGDKQKWTATNVRNTFLDYFKSKEHKFVKSSPVVPFDDPTLLFANAGMNQYKPIFLGTVDPASDFYTLKRAYNSQKCIRAGGKHNDLEDVGKDSYHHTFFEMLGNWSFGDYFKKEAITYSWTLLTEVYGIPKDRLYVTYFEGDEKLGLEPDTEARELWKNVGVPDDHILPGNAKDNFWEMGDQGPCGPCSEIHYDRIGGRNAASLVNMDDPDVLEVWNLVFIQFNREQDGSLKPLPAKHIDTGMGFERLVSVLQDVRSNYDTDVFTPLFERIQEITSVRPYSGNFGENDKDGIDTAYRVLADHVRTLTFALADGGVPNNEGRGYVLRRILRRGARYARKYMNYPIGNFFSTLAPTLISQVQDIFPELAKDPAFLFEILDEEEASFAKTLDRGERLFEKYASAASKTESKTLDGKQVWRLYDTYGFPVDLTELMAEEQGLKIDGPGFEKAKQESYEASKRGGKKDQSDLIKLNVHELSELNDAKVPKTNDEFKYGSANVEGTILKLHDGTNFVDEITEPGKKYGIILDKTCFYAEQGGQEYDTGKIVIDDAAEFNVENVQLYNGFVFHTGSLEEGKLSVGDKIIASFDELRRFPIKNNHTGTHILNFALKETLGNDVDQKGSLVAPEKLRFDFSHKKAVSNEELKKVEDICNEQIKENLQVFYKEIPLDLAKSIDGVRAVFGETYPDPVRVVSVGKPIEELLANPANEEWTKYSIEFCGGTHVNKTGDIKYFVILEESGIAKGIRRIVAVTGTEAFEAQRLAEQFAADLDAADKLPFSPIKEKKLKELGVKLGQLSISVITKNELKQKFNKIEKAVKDEVKSRAKKENKQTLDEVKTFFETNENAPYLVKFIDISPNAKAITEAINYMKSNDSVKDKSIYLLAGNDPEGRVAHGCYISNAALAKGIDGSALAKKVSSIIGGKAGGKGNVFQGMGDKPAAIKDAVDDLESLFKEKLSI</sequence>
<proteinExistence type="evidence at protein level"/>
<keyword id="KW-0024">Alternative initiation</keyword>
<keyword id="KW-0030">Aminoacyl-tRNA synthetase</keyword>
<keyword id="KW-0067">ATP-binding</keyword>
<keyword id="KW-0963">Cytoplasm</keyword>
<keyword id="KW-0436">Ligase</keyword>
<keyword id="KW-0479">Metal-binding</keyword>
<keyword id="KW-0496">Mitochondrion</keyword>
<keyword id="KW-0547">Nucleotide-binding</keyword>
<keyword id="KW-0597">Phosphoprotein</keyword>
<keyword id="KW-0648">Protein biosynthesis</keyword>
<keyword id="KW-1185">Reference proteome</keyword>
<keyword id="KW-0694">RNA-binding</keyword>
<keyword id="KW-0809">Transit peptide</keyword>
<keyword id="KW-0820">tRNA-binding</keyword>
<keyword id="KW-0862">Zinc</keyword>
<reference key="1">
    <citation type="journal article" date="1996" name="Yeast">
        <title>Sequence of 29 kb around the PDR10 locus on the right arm of Saccharomyces cerevisiae chromosome XV: similarity to part of chromosome I.</title>
        <authorList>
            <person name="Parle-McDermott A.G."/>
            <person name="Hand N.J."/>
            <person name="Goulding S.E."/>
            <person name="Wolfe K.H."/>
        </authorList>
    </citation>
    <scope>NUCLEOTIDE SEQUENCE [GENOMIC DNA]</scope>
</reference>
<reference key="2">
    <citation type="journal article" date="1997" name="Nature">
        <title>The nucleotide sequence of Saccharomyces cerevisiae chromosome XV.</title>
        <authorList>
            <person name="Dujon B."/>
            <person name="Albermann K."/>
            <person name="Aldea M."/>
            <person name="Alexandraki D."/>
            <person name="Ansorge W."/>
            <person name="Arino J."/>
            <person name="Benes V."/>
            <person name="Bohn C."/>
            <person name="Bolotin-Fukuhara M."/>
            <person name="Bordonne R."/>
            <person name="Boyer J."/>
            <person name="Camasses A."/>
            <person name="Casamayor A."/>
            <person name="Casas C."/>
            <person name="Cheret G."/>
            <person name="Cziepluch C."/>
            <person name="Daignan-Fornier B."/>
            <person name="Dang V.-D."/>
            <person name="de Haan M."/>
            <person name="Delius H."/>
            <person name="Durand P."/>
            <person name="Fairhead C."/>
            <person name="Feldmann H."/>
            <person name="Gaillon L."/>
            <person name="Galisson F."/>
            <person name="Gamo F.-J."/>
            <person name="Gancedo C."/>
            <person name="Goffeau A."/>
            <person name="Goulding S.E."/>
            <person name="Grivell L.A."/>
            <person name="Habbig B."/>
            <person name="Hand N.J."/>
            <person name="Hani J."/>
            <person name="Hattenhorst U."/>
            <person name="Hebling U."/>
            <person name="Hernando Y."/>
            <person name="Herrero E."/>
            <person name="Heumann K."/>
            <person name="Hiesel R."/>
            <person name="Hilger F."/>
            <person name="Hofmann B."/>
            <person name="Hollenberg C.P."/>
            <person name="Hughes B."/>
            <person name="Jauniaux J.-C."/>
            <person name="Kalogeropoulos A."/>
            <person name="Katsoulou C."/>
            <person name="Kordes E."/>
            <person name="Lafuente M.J."/>
            <person name="Landt O."/>
            <person name="Louis E.J."/>
            <person name="Maarse A.C."/>
            <person name="Madania A."/>
            <person name="Mannhaupt G."/>
            <person name="Marck C."/>
            <person name="Martin R.P."/>
            <person name="Mewes H.-W."/>
            <person name="Michaux G."/>
            <person name="Paces V."/>
            <person name="Parle-McDermott A.G."/>
            <person name="Pearson B.M."/>
            <person name="Perrin A."/>
            <person name="Pettersson B."/>
            <person name="Poch O."/>
            <person name="Pohl T.M."/>
            <person name="Poirey R."/>
            <person name="Portetelle D."/>
            <person name="Pujol A."/>
            <person name="Purnelle B."/>
            <person name="Ramezani Rad M."/>
            <person name="Rechmann S."/>
            <person name="Schwager C."/>
            <person name="Schweizer M."/>
            <person name="Sor F."/>
            <person name="Sterky F."/>
            <person name="Tarassov I.A."/>
            <person name="Teodoru C."/>
            <person name="Tettelin H."/>
            <person name="Thierry A."/>
            <person name="Tobiasch E."/>
            <person name="Tzermia M."/>
            <person name="Uhlen M."/>
            <person name="Unseld M."/>
            <person name="Valens M."/>
            <person name="Vandenbol M."/>
            <person name="Vetter I."/>
            <person name="Vlcek C."/>
            <person name="Voet M."/>
            <person name="Volckaert G."/>
            <person name="Voss H."/>
            <person name="Wambutt R."/>
            <person name="Wedler H."/>
            <person name="Wiemann S."/>
            <person name="Winsor B."/>
            <person name="Wolfe K.H."/>
            <person name="Zollner A."/>
            <person name="Zumstein E."/>
            <person name="Kleine K."/>
        </authorList>
    </citation>
    <scope>NUCLEOTIDE SEQUENCE [LARGE SCALE GENOMIC DNA]</scope>
    <source>
        <strain>ATCC 204508 / S288c</strain>
    </source>
</reference>
<reference key="3">
    <citation type="journal article" date="2014" name="G3 (Bethesda)">
        <title>The reference genome sequence of Saccharomyces cerevisiae: Then and now.</title>
        <authorList>
            <person name="Engel S.R."/>
            <person name="Dietrich F.S."/>
            <person name="Fisk D.G."/>
            <person name="Binkley G."/>
            <person name="Balakrishnan R."/>
            <person name="Costanzo M.C."/>
            <person name="Dwight S.S."/>
            <person name="Hitz B.C."/>
            <person name="Karra K."/>
            <person name="Nash R.S."/>
            <person name="Weng S."/>
            <person name="Wong E.D."/>
            <person name="Lloyd P."/>
            <person name="Skrzypek M.S."/>
            <person name="Miyasato S.R."/>
            <person name="Simison M."/>
            <person name="Cherry J.M."/>
        </authorList>
    </citation>
    <scope>GENOME REANNOTATION</scope>
    <source>
        <strain>ATCC 204508 / S288c</strain>
    </source>
</reference>
<reference key="4">
    <citation type="journal article" date="1995" name="Proc. Natl. Acad. Sci. U.S.A.">
        <title>Wide cross-species aminoacyl-tRNA synthetase replacement in vivo: yeast cytoplasmic alanine enzyme replaced by human polymyositis serum antigen.</title>
        <authorList>
            <person name="Ripmaster T.L."/>
            <person name="Shiba K."/>
            <person name="Schimmel P."/>
        </authorList>
    </citation>
    <scope>NUCLEOTIDE SEQUENCE [GENOMIC DNA] OF 4-983</scope>
    <scope>FUNCTION</scope>
</reference>
<reference key="5">
    <citation type="journal article" date="2003" name="Nature">
        <title>Global analysis of protein localization in budding yeast.</title>
        <authorList>
            <person name="Huh W.-K."/>
            <person name="Falvo J.V."/>
            <person name="Gerke L.C."/>
            <person name="Carroll A.S."/>
            <person name="Howson R.W."/>
            <person name="Weissman J.S."/>
            <person name="O'Shea E.K."/>
        </authorList>
    </citation>
    <scope>SUBCELLULAR LOCATION [LARGE SCALE ANALYSIS]</scope>
</reference>
<reference key="6">
    <citation type="journal article" date="2003" name="Nature">
        <title>Global analysis of protein expression in yeast.</title>
        <authorList>
            <person name="Ghaemmaghami S."/>
            <person name="Huh W.-K."/>
            <person name="Bower K."/>
            <person name="Howson R.W."/>
            <person name="Belle A."/>
            <person name="Dephoure N."/>
            <person name="O'Shea E.K."/>
            <person name="Weissman J.S."/>
        </authorList>
    </citation>
    <scope>LEVEL OF PROTEIN EXPRESSION [LARGE SCALE ANALYSIS]</scope>
</reference>
<reference key="7">
    <citation type="journal article" date="2003" name="Proc. Natl. Acad. Sci. U.S.A.">
        <title>The proteome of Saccharomyces cerevisiae mitochondria.</title>
        <authorList>
            <person name="Sickmann A."/>
            <person name="Reinders J."/>
            <person name="Wagner Y."/>
            <person name="Joppich C."/>
            <person name="Zahedi R.P."/>
            <person name="Meyer H.E."/>
            <person name="Schoenfisch B."/>
            <person name="Perschil I."/>
            <person name="Chacinska A."/>
            <person name="Guiard B."/>
            <person name="Rehling P."/>
            <person name="Pfanner N."/>
            <person name="Meisinger C."/>
        </authorList>
    </citation>
    <scope>SUBCELLULAR LOCATION [LARGE SCALE ANALYSIS]</scope>
</reference>
<reference key="8">
    <citation type="journal article" date="2004" name="J. Biol. Chem.">
        <title>Translation of a yeast mitochondrial tRNA synthetase initiated at redundant non-AUG codons.</title>
        <authorList>
            <person name="Tang H.L."/>
            <person name="Yeh L.S."/>
            <person name="Chen N.K."/>
            <person name="Ripmaster T."/>
            <person name="Schimmel P."/>
            <person name="Wang C.C."/>
        </authorList>
    </citation>
    <scope>ALTERNATIVE INITIATION</scope>
</reference>
<reference key="9">
    <citation type="journal article" date="2006" name="Mol. Microbiol.">
        <title>An unusual pattern of protein expression and localization of yeast alanyl-tRNA synthetase isoforms.</title>
        <authorList>
            <person name="Huang H.Y."/>
            <person name="Tang H.L."/>
            <person name="Chao H.Y."/>
            <person name="Yeh L.S."/>
            <person name="Wang C.C."/>
        </authorList>
    </citation>
    <scope>SUBCELLULAR LOCATION</scope>
</reference>
<reference key="10">
    <citation type="journal article" date="2008" name="Mol. Cell. Proteomics">
        <title>A multidimensional chromatography technology for in-depth phosphoproteome analysis.</title>
        <authorList>
            <person name="Albuquerque C.P."/>
            <person name="Smolka M.B."/>
            <person name="Payne S.H."/>
            <person name="Bafna V."/>
            <person name="Eng J."/>
            <person name="Zhou H."/>
        </authorList>
    </citation>
    <scope>PHOSPHORYLATION [LARGE SCALE ANALYSIS] AT SER-504</scope>
    <scope>IDENTIFICATION BY MASS SPECTROMETRY [LARGE SCALE ANALYSIS]</scope>
</reference>
<reference key="11">
    <citation type="journal article" date="2009" name="Science">
        <title>Global analysis of Cdk1 substrate phosphorylation sites provides insights into evolution.</title>
        <authorList>
            <person name="Holt L.J."/>
            <person name="Tuch B.B."/>
            <person name="Villen J."/>
            <person name="Johnson A.D."/>
            <person name="Gygi S.P."/>
            <person name="Morgan D.O."/>
        </authorList>
    </citation>
    <scope>PHOSPHORYLATION [LARGE SCALE ANALYSIS] AT SER-975</scope>
    <scope>IDENTIFICATION BY MASS SPECTROMETRY [LARGE SCALE ANALYSIS]</scope>
</reference>
<protein>
    <recommendedName>
        <fullName evidence="1">Alanine--tRNA ligase, mitochondrial</fullName>
        <ecNumber evidence="1">6.1.1.7</ecNumber>
    </recommendedName>
    <alternativeName>
        <fullName evidence="1">Alanyl-tRNA synthetase</fullName>
        <shortName evidence="1">AlaRS</shortName>
    </alternativeName>
</protein>
<name>SYA_YEAST</name>
<dbReference type="EC" id="6.1.1.7" evidence="1"/>
<dbReference type="EMBL" id="Z49821">
    <property type="protein sequence ID" value="CAA89980.1"/>
    <property type="status" value="ALT_INIT"/>
    <property type="molecule type" value="Genomic_DNA"/>
</dbReference>
<dbReference type="EMBL" id="Z75243">
    <property type="protein sequence ID" value="CAA99658.1"/>
    <property type="status" value="ALT_INIT"/>
    <property type="molecule type" value="Genomic_DNA"/>
</dbReference>
<dbReference type="EMBL" id="U18672">
    <property type="protein sequence ID" value="AAC49007.1"/>
    <property type="status" value="ALT_INIT"/>
    <property type="molecule type" value="Genomic_DNA"/>
</dbReference>
<dbReference type="EMBL" id="BK006948">
    <property type="protein sequence ID" value="DAA11096.1"/>
    <property type="status" value="ALT_INIT"/>
    <property type="molecule type" value="Genomic_DNA"/>
</dbReference>
<dbReference type="PIR" id="S62065">
    <property type="entry name" value="S62065"/>
</dbReference>
<dbReference type="RefSeq" id="NP_014980.3">
    <molecule id="P40825-2"/>
    <property type="nucleotide sequence ID" value="NM_001183755.3"/>
</dbReference>
<dbReference type="SMR" id="P40825"/>
<dbReference type="BioGRID" id="34718">
    <property type="interactions" value="361"/>
</dbReference>
<dbReference type="DIP" id="DIP-6286N"/>
<dbReference type="FunCoup" id="P40825">
    <property type="interactions" value="1196"/>
</dbReference>
<dbReference type="IntAct" id="P40825">
    <property type="interactions" value="10"/>
</dbReference>
<dbReference type="MINT" id="P40825"/>
<dbReference type="STRING" id="4932.YOR335C"/>
<dbReference type="CarbonylDB" id="P40825"/>
<dbReference type="iPTMnet" id="P40825"/>
<dbReference type="PaxDb" id="4932-YOR335C"/>
<dbReference type="PeptideAtlas" id="P40825"/>
<dbReference type="EnsemblFungi" id="YOR335C_mRNA">
    <molecule id="P40825-2"/>
    <property type="protein sequence ID" value="YOR335C"/>
    <property type="gene ID" value="YOR335C"/>
</dbReference>
<dbReference type="GeneID" id="854513"/>
<dbReference type="KEGG" id="sce:YOR335C"/>
<dbReference type="AGR" id="SGD:S000005862"/>
<dbReference type="SGD" id="S000005862">
    <property type="gene designation" value="ALA1"/>
</dbReference>
<dbReference type="eggNOG" id="KOG0188">
    <property type="taxonomic scope" value="Eukaryota"/>
</dbReference>
<dbReference type="GeneTree" id="ENSGT00940000157335"/>
<dbReference type="HOGENOM" id="CLU_004485_5_0_1"/>
<dbReference type="InParanoid" id="P40825"/>
<dbReference type="OMA" id="NKKDNFW"/>
<dbReference type="OrthoDB" id="2423964at2759"/>
<dbReference type="BioCyc" id="YEAST:G3O-33810-MONOMER"/>
<dbReference type="BRENDA" id="6.1.1.7">
    <property type="organism ID" value="984"/>
</dbReference>
<dbReference type="BioGRID-ORCS" id="854513">
    <property type="hits" value="0 hits in 10 CRISPR screens"/>
</dbReference>
<dbReference type="CD-CODE" id="E03F929F">
    <property type="entry name" value="Stress granule"/>
</dbReference>
<dbReference type="PRO" id="PR:P40825"/>
<dbReference type="Proteomes" id="UP000002311">
    <property type="component" value="Chromosome XV"/>
</dbReference>
<dbReference type="RNAct" id="P40825">
    <property type="molecule type" value="protein"/>
</dbReference>
<dbReference type="GO" id="GO:0005737">
    <property type="term" value="C:cytoplasm"/>
    <property type="evidence" value="ECO:0000314"/>
    <property type="project" value="SGD"/>
</dbReference>
<dbReference type="GO" id="GO:0005739">
    <property type="term" value="C:mitochondrion"/>
    <property type="evidence" value="ECO:0000314"/>
    <property type="project" value="SGD"/>
</dbReference>
<dbReference type="GO" id="GO:0004813">
    <property type="term" value="F:alanine-tRNA ligase activity"/>
    <property type="evidence" value="ECO:0000315"/>
    <property type="project" value="SGD"/>
</dbReference>
<dbReference type="GO" id="GO:0002161">
    <property type="term" value="F:aminoacyl-tRNA deacylase activity"/>
    <property type="evidence" value="ECO:0000318"/>
    <property type="project" value="GO_Central"/>
</dbReference>
<dbReference type="GO" id="GO:0005524">
    <property type="term" value="F:ATP binding"/>
    <property type="evidence" value="ECO:0007669"/>
    <property type="project" value="UniProtKB-UniRule"/>
</dbReference>
<dbReference type="GO" id="GO:1990825">
    <property type="term" value="F:sequence-specific mRNA binding"/>
    <property type="evidence" value="ECO:0000314"/>
    <property type="project" value="SGD"/>
</dbReference>
<dbReference type="GO" id="GO:0000049">
    <property type="term" value="F:tRNA binding"/>
    <property type="evidence" value="ECO:0007669"/>
    <property type="project" value="UniProtKB-KW"/>
</dbReference>
<dbReference type="GO" id="GO:0008270">
    <property type="term" value="F:zinc ion binding"/>
    <property type="evidence" value="ECO:0007669"/>
    <property type="project" value="UniProtKB-UniRule"/>
</dbReference>
<dbReference type="GO" id="GO:0006419">
    <property type="term" value="P:alanyl-tRNA aminoacylation"/>
    <property type="evidence" value="ECO:0000315"/>
    <property type="project" value="SGD"/>
</dbReference>
<dbReference type="GO" id="GO:0070143">
    <property type="term" value="P:mitochondrial alanyl-tRNA aminoacylation"/>
    <property type="evidence" value="ECO:0007669"/>
    <property type="project" value="UniProtKB-UniRule"/>
</dbReference>
<dbReference type="CDD" id="cd00673">
    <property type="entry name" value="AlaRS_core"/>
    <property type="match status" value="1"/>
</dbReference>
<dbReference type="FunFam" id="2.40.30.130:FF:000004">
    <property type="entry name" value="Alanine--tRNA ligase"/>
    <property type="match status" value="1"/>
</dbReference>
<dbReference type="FunFam" id="3.10.310.40:FF:000003">
    <property type="entry name" value="Alanine--tRNA ligase"/>
    <property type="match status" value="1"/>
</dbReference>
<dbReference type="FunFam" id="3.30.930.10:FF:000011">
    <property type="entry name" value="Alanine--tRNA ligase, cytoplasmic"/>
    <property type="match status" value="1"/>
</dbReference>
<dbReference type="FunFam" id="3.30.980.10:FF:000004">
    <property type="entry name" value="Alanine--tRNA ligase, cytoplasmic"/>
    <property type="match status" value="1"/>
</dbReference>
<dbReference type="Gene3D" id="2.40.30.130">
    <property type="match status" value="1"/>
</dbReference>
<dbReference type="Gene3D" id="3.10.310.40">
    <property type="match status" value="1"/>
</dbReference>
<dbReference type="Gene3D" id="3.30.930.10">
    <property type="entry name" value="Bira Bifunctional Protein, Domain 2"/>
    <property type="match status" value="1"/>
</dbReference>
<dbReference type="Gene3D" id="3.30.980.10">
    <property type="entry name" value="Threonyl-trna Synthetase, Chain A, domain 2"/>
    <property type="match status" value="1"/>
</dbReference>
<dbReference type="HAMAP" id="MF_00036_B">
    <property type="entry name" value="Ala_tRNA_synth_B"/>
    <property type="match status" value="1"/>
</dbReference>
<dbReference type="InterPro" id="IPR045864">
    <property type="entry name" value="aa-tRNA-synth_II/BPL/LPL"/>
</dbReference>
<dbReference type="InterPro" id="IPR002318">
    <property type="entry name" value="Ala-tRNA-lgiase_IIc"/>
</dbReference>
<dbReference type="InterPro" id="IPR018162">
    <property type="entry name" value="Ala-tRNA-ligase_IIc_anticod-bd"/>
</dbReference>
<dbReference type="InterPro" id="IPR018165">
    <property type="entry name" value="Ala-tRNA-synth_IIc_core"/>
</dbReference>
<dbReference type="InterPro" id="IPR018164">
    <property type="entry name" value="Ala-tRNA-synth_IIc_N"/>
</dbReference>
<dbReference type="InterPro" id="IPR050058">
    <property type="entry name" value="Ala-tRNA_ligase"/>
</dbReference>
<dbReference type="InterPro" id="IPR023033">
    <property type="entry name" value="Ala_tRNA_ligase_euk/bac"/>
</dbReference>
<dbReference type="InterPro" id="IPR003156">
    <property type="entry name" value="DHHA1_dom"/>
</dbReference>
<dbReference type="InterPro" id="IPR018163">
    <property type="entry name" value="Thr/Ala-tRNA-synth_IIc_edit"/>
</dbReference>
<dbReference type="InterPro" id="IPR009000">
    <property type="entry name" value="Transl_B-barrel_sf"/>
</dbReference>
<dbReference type="InterPro" id="IPR012947">
    <property type="entry name" value="tRNA_SAD"/>
</dbReference>
<dbReference type="NCBIfam" id="TIGR00344">
    <property type="entry name" value="alaS"/>
    <property type="match status" value="1"/>
</dbReference>
<dbReference type="PANTHER" id="PTHR11777:SF9">
    <property type="entry name" value="ALANINE--TRNA LIGASE, CYTOPLASMIC"/>
    <property type="match status" value="1"/>
</dbReference>
<dbReference type="PANTHER" id="PTHR11777">
    <property type="entry name" value="ALANYL-TRNA SYNTHETASE"/>
    <property type="match status" value="1"/>
</dbReference>
<dbReference type="Pfam" id="PF02272">
    <property type="entry name" value="DHHA1"/>
    <property type="match status" value="1"/>
</dbReference>
<dbReference type="Pfam" id="PF01411">
    <property type="entry name" value="tRNA-synt_2c"/>
    <property type="match status" value="1"/>
</dbReference>
<dbReference type="Pfam" id="PF07973">
    <property type="entry name" value="tRNA_SAD"/>
    <property type="match status" value="1"/>
</dbReference>
<dbReference type="PRINTS" id="PR00980">
    <property type="entry name" value="TRNASYNTHALA"/>
</dbReference>
<dbReference type="SMART" id="SM00863">
    <property type="entry name" value="tRNA_SAD"/>
    <property type="match status" value="1"/>
</dbReference>
<dbReference type="SUPFAM" id="SSF55681">
    <property type="entry name" value="Class II aaRS and biotin synthetases"/>
    <property type="match status" value="1"/>
</dbReference>
<dbReference type="SUPFAM" id="SSF101353">
    <property type="entry name" value="Putative anticodon-binding domain of alanyl-tRNA synthetase (AlaRS)"/>
    <property type="match status" value="1"/>
</dbReference>
<dbReference type="SUPFAM" id="SSF55186">
    <property type="entry name" value="ThrRS/AlaRS common domain"/>
    <property type="match status" value="1"/>
</dbReference>
<dbReference type="SUPFAM" id="SSF50447">
    <property type="entry name" value="Translation proteins"/>
    <property type="match status" value="1"/>
</dbReference>
<dbReference type="PROSITE" id="PS50860">
    <property type="entry name" value="AA_TRNA_LIGASE_II_ALA"/>
    <property type="match status" value="1"/>
</dbReference>
<organism>
    <name type="scientific">Saccharomyces cerevisiae (strain ATCC 204508 / S288c)</name>
    <name type="common">Baker's yeast</name>
    <dbReference type="NCBI Taxonomy" id="559292"/>
    <lineage>
        <taxon>Eukaryota</taxon>
        <taxon>Fungi</taxon>
        <taxon>Dikarya</taxon>
        <taxon>Ascomycota</taxon>
        <taxon>Saccharomycotina</taxon>
        <taxon>Saccharomycetes</taxon>
        <taxon>Saccharomycetales</taxon>
        <taxon>Saccharomycetaceae</taxon>
        <taxon>Saccharomyces</taxon>
    </lineage>
</organism>
<evidence type="ECO:0000255" key="1">
    <source>
        <dbReference type="HAMAP-Rule" id="MF_03133"/>
    </source>
</evidence>
<evidence type="ECO:0000269" key="2">
    <source>
    </source>
</evidence>
<evidence type="ECO:0000269" key="3">
    <source>
    </source>
</evidence>
<evidence type="ECO:0000305" key="4"/>
<evidence type="ECO:0007744" key="5">
    <source>
    </source>
</evidence>
<evidence type="ECO:0007744" key="6">
    <source>
    </source>
</evidence>
<gene>
    <name evidence="1" type="primary">ALA1</name>
    <name type="synonym">CDC64</name>
    <name type="ordered locus">YOR335C</name>
</gene>